<proteinExistence type="inferred from homology"/>
<sequence>MSYYAFEGLIPVVHPDAFVHPSAVLIGDVIVGAGVYIGPLASLRGDYGRQILEAGSNLQDGCIMHGYCDTDTIVHENGHIGHGAILHGCVVGRDALVGMNSVIMDGAVIGEESIVAAMSFVKAGFQGEARQLLVGSPARVLRQVTDQELHWKRLNTKEYQDLAIRCRTGLSETKPLTQVEENRPRLKGTTDVKPKSAQ</sequence>
<keyword id="KW-0677">Repeat</keyword>
<keyword id="KW-0808">Transferase</keyword>
<gene>
    <name evidence="1" type="primary">caiE</name>
    <name type="ordered locus">SCH_0063</name>
</gene>
<dbReference type="EMBL" id="AE017220">
    <property type="protein sequence ID" value="AAX63969.1"/>
    <property type="molecule type" value="Genomic_DNA"/>
</dbReference>
<dbReference type="RefSeq" id="WP_001538919.1">
    <property type="nucleotide sequence ID" value="NC_006905.1"/>
</dbReference>
<dbReference type="SMR" id="Q57TJ2"/>
<dbReference type="KEGG" id="sec:SCH_0063"/>
<dbReference type="HOGENOM" id="CLU_064827_4_2_6"/>
<dbReference type="UniPathway" id="UPA00117"/>
<dbReference type="Proteomes" id="UP000000538">
    <property type="component" value="Chromosome"/>
</dbReference>
<dbReference type="GO" id="GO:0016740">
    <property type="term" value="F:transferase activity"/>
    <property type="evidence" value="ECO:0007669"/>
    <property type="project" value="UniProtKB-KW"/>
</dbReference>
<dbReference type="GO" id="GO:0009437">
    <property type="term" value="P:carnitine metabolic process"/>
    <property type="evidence" value="ECO:0007669"/>
    <property type="project" value="UniProtKB-UniRule"/>
</dbReference>
<dbReference type="CDD" id="cd04745">
    <property type="entry name" value="LbH_paaY_like"/>
    <property type="match status" value="1"/>
</dbReference>
<dbReference type="FunFam" id="2.160.10.10:FF:000012">
    <property type="entry name" value="Carnitine operon protein CaiE"/>
    <property type="match status" value="1"/>
</dbReference>
<dbReference type="Gene3D" id="2.160.10.10">
    <property type="entry name" value="Hexapeptide repeat proteins"/>
    <property type="match status" value="1"/>
</dbReference>
<dbReference type="HAMAP" id="MF_01525">
    <property type="entry name" value="CaiE"/>
    <property type="match status" value="1"/>
</dbReference>
<dbReference type="InterPro" id="IPR023446">
    <property type="entry name" value="CaiE"/>
</dbReference>
<dbReference type="InterPro" id="IPR001451">
    <property type="entry name" value="Hexapep"/>
</dbReference>
<dbReference type="InterPro" id="IPR050484">
    <property type="entry name" value="Transf_Hexapept/Carb_Anhydrase"/>
</dbReference>
<dbReference type="InterPro" id="IPR011004">
    <property type="entry name" value="Trimer_LpxA-like_sf"/>
</dbReference>
<dbReference type="NCBIfam" id="NF010150">
    <property type="entry name" value="PRK13627.1"/>
    <property type="match status" value="1"/>
</dbReference>
<dbReference type="PANTHER" id="PTHR13061">
    <property type="entry name" value="DYNACTIN SUBUNIT P25"/>
    <property type="match status" value="1"/>
</dbReference>
<dbReference type="PANTHER" id="PTHR13061:SF29">
    <property type="entry name" value="GAMMA CARBONIC ANHYDRASE-LIKE 1, MITOCHONDRIAL-RELATED"/>
    <property type="match status" value="1"/>
</dbReference>
<dbReference type="Pfam" id="PF00132">
    <property type="entry name" value="Hexapep"/>
    <property type="match status" value="2"/>
</dbReference>
<dbReference type="SUPFAM" id="SSF51161">
    <property type="entry name" value="Trimeric LpxA-like enzymes"/>
    <property type="match status" value="1"/>
</dbReference>
<comment type="function">
    <text evidence="1">Overproduction of CaiE stimulates the activity of CaiB and CaiD.</text>
</comment>
<comment type="pathway">
    <text evidence="1">Amine and polyamine metabolism; carnitine metabolism.</text>
</comment>
<comment type="similarity">
    <text evidence="1">Belongs to the transferase hexapeptide repeat family.</text>
</comment>
<protein>
    <recommendedName>
        <fullName evidence="1">Carnitine operon protein CaiE</fullName>
    </recommendedName>
</protein>
<feature type="chain" id="PRO_0000068723" description="Carnitine operon protein CaiE">
    <location>
        <begin position="1"/>
        <end position="198"/>
    </location>
</feature>
<feature type="region of interest" description="Disordered" evidence="2">
    <location>
        <begin position="179"/>
        <end position="198"/>
    </location>
</feature>
<feature type="compositionally biased region" description="Basic and acidic residues" evidence="2">
    <location>
        <begin position="180"/>
        <end position="198"/>
    </location>
</feature>
<name>CAIE_SALCH</name>
<accession>Q57TJ2</accession>
<organism>
    <name type="scientific">Salmonella choleraesuis (strain SC-B67)</name>
    <dbReference type="NCBI Taxonomy" id="321314"/>
    <lineage>
        <taxon>Bacteria</taxon>
        <taxon>Pseudomonadati</taxon>
        <taxon>Pseudomonadota</taxon>
        <taxon>Gammaproteobacteria</taxon>
        <taxon>Enterobacterales</taxon>
        <taxon>Enterobacteriaceae</taxon>
        <taxon>Salmonella</taxon>
    </lineage>
</organism>
<evidence type="ECO:0000255" key="1">
    <source>
        <dbReference type="HAMAP-Rule" id="MF_01525"/>
    </source>
</evidence>
<evidence type="ECO:0000256" key="2">
    <source>
        <dbReference type="SAM" id="MobiDB-lite"/>
    </source>
</evidence>
<reference key="1">
    <citation type="journal article" date="2005" name="Nucleic Acids Res.">
        <title>The genome sequence of Salmonella enterica serovar Choleraesuis, a highly invasive and resistant zoonotic pathogen.</title>
        <authorList>
            <person name="Chiu C.-H."/>
            <person name="Tang P."/>
            <person name="Chu C."/>
            <person name="Hu S."/>
            <person name="Bao Q."/>
            <person name="Yu J."/>
            <person name="Chou Y.-Y."/>
            <person name="Wang H.-S."/>
            <person name="Lee Y.-S."/>
        </authorList>
    </citation>
    <scope>NUCLEOTIDE SEQUENCE [LARGE SCALE GENOMIC DNA]</scope>
    <source>
        <strain>SC-B67</strain>
    </source>
</reference>